<reference key="1">
    <citation type="journal article" date="2004" name="Nat. Biotechnol.">
        <title>The genome sequence of the capnophilic rumen bacterium Mannheimia succiniciproducens.</title>
        <authorList>
            <person name="Hong S.H."/>
            <person name="Kim J.S."/>
            <person name="Lee S.Y."/>
            <person name="In Y.H."/>
            <person name="Choi S.S."/>
            <person name="Rih J.-K."/>
            <person name="Kim C.H."/>
            <person name="Jeong H."/>
            <person name="Hur C.G."/>
            <person name="Kim J.J."/>
        </authorList>
    </citation>
    <scope>NUCLEOTIDE SEQUENCE [LARGE SCALE GENOMIC DNA]</scope>
    <source>
        <strain>KCTC 0769BP / MBEL55E</strain>
    </source>
</reference>
<sequence>MKFSEQWVREWVNPAVNTEQLCDQITMLGLEVDGVEAVAGEFNGVVVGEVVECAQHPDADKLRVTKVNVGGERLLDIVCGAPNCRQGLKVACAIEGAVLPGDFKIKKTKLRGQPSEGMLCSYRELGMSEDHSGIIELPADAPVGKDFREYLILDDKEIEISLTPNRADCLSIAGVAREIGVVNQLAVTEPAINPVPVTSDEKVAINVLAPEACPRYLLRSVKNVNVNAETPVWMKEKLRRCGIRSIDPIVDITNFVLLELGQPMHAFDAAKLAQPVQVRFAADGEELVLLDGTTAKLQSNTLVIADQTGPLAMAGIFGGQASGVNAQTKDVILEAAFFAPLAITGRARQYGLHTDSSHRFERGVDFELQHKAMERATSLLVEICGGEVGEICEVVSETHLPKLNKVQLRRSKLDALLGHHIETETVTEIFHRLGLPVSYENEVWTVTSASWRFDIEIEEDLIEEIARIYGYNSIPNNAPLAHLSMREHHESDLELSRIKLALVGNDFHEAITYSFVDPKLQSILHPEQAVWILPNPISSEMSAMRVSLLTGLLGAVVYNQNRQQNRVRLFETGLRFIPDESAEFGIRQELVFAAVMTGSRLSEHWASKAEPADFFDLKGYIENLLSLTKAGPYIKFVAKEFPAFHPGQSAAIVLDGEEIGYIGQLHPMAAQKLGINGKAFACELIVDKVAERNVANAKEISKFPANKRDLALVVAENIAASDILDACREVAGSKLTQVNLFDVYQGQGVPEGHKSLAISLTIQDTEKTLEEDDINAVISVVLSELKDRFNAYLRD</sequence>
<accession>Q65TL3</accession>
<keyword id="KW-0030">Aminoacyl-tRNA synthetase</keyword>
<keyword id="KW-0067">ATP-binding</keyword>
<keyword id="KW-0963">Cytoplasm</keyword>
<keyword id="KW-0436">Ligase</keyword>
<keyword id="KW-0460">Magnesium</keyword>
<keyword id="KW-0479">Metal-binding</keyword>
<keyword id="KW-0547">Nucleotide-binding</keyword>
<keyword id="KW-0648">Protein biosynthesis</keyword>
<keyword id="KW-0694">RNA-binding</keyword>
<keyword id="KW-0820">tRNA-binding</keyword>
<protein>
    <recommendedName>
        <fullName evidence="1">Phenylalanine--tRNA ligase beta subunit</fullName>
        <ecNumber evidence="1">6.1.1.20</ecNumber>
    </recommendedName>
    <alternativeName>
        <fullName evidence="1">Phenylalanyl-tRNA synthetase beta subunit</fullName>
        <shortName evidence="1">PheRS</shortName>
    </alternativeName>
</protein>
<comment type="catalytic activity">
    <reaction evidence="1">
        <text>tRNA(Phe) + L-phenylalanine + ATP = L-phenylalanyl-tRNA(Phe) + AMP + diphosphate + H(+)</text>
        <dbReference type="Rhea" id="RHEA:19413"/>
        <dbReference type="Rhea" id="RHEA-COMP:9668"/>
        <dbReference type="Rhea" id="RHEA-COMP:9699"/>
        <dbReference type="ChEBI" id="CHEBI:15378"/>
        <dbReference type="ChEBI" id="CHEBI:30616"/>
        <dbReference type="ChEBI" id="CHEBI:33019"/>
        <dbReference type="ChEBI" id="CHEBI:58095"/>
        <dbReference type="ChEBI" id="CHEBI:78442"/>
        <dbReference type="ChEBI" id="CHEBI:78531"/>
        <dbReference type="ChEBI" id="CHEBI:456215"/>
        <dbReference type="EC" id="6.1.1.20"/>
    </reaction>
</comment>
<comment type="cofactor">
    <cofactor evidence="1">
        <name>Mg(2+)</name>
        <dbReference type="ChEBI" id="CHEBI:18420"/>
    </cofactor>
    <text evidence="1">Binds 2 magnesium ions per tetramer.</text>
</comment>
<comment type="subunit">
    <text evidence="1">Tetramer of two alpha and two beta subunits.</text>
</comment>
<comment type="subcellular location">
    <subcellularLocation>
        <location evidence="1">Cytoplasm</location>
    </subcellularLocation>
</comment>
<comment type="similarity">
    <text evidence="1">Belongs to the phenylalanyl-tRNA synthetase beta subunit family. Type 1 subfamily.</text>
</comment>
<proteinExistence type="inferred from homology"/>
<evidence type="ECO:0000255" key="1">
    <source>
        <dbReference type="HAMAP-Rule" id="MF_00283"/>
    </source>
</evidence>
<dbReference type="EC" id="6.1.1.20" evidence="1"/>
<dbReference type="EMBL" id="AE016827">
    <property type="protein sequence ID" value="AAU37697.1"/>
    <property type="molecule type" value="Genomic_DNA"/>
</dbReference>
<dbReference type="RefSeq" id="WP_011200265.1">
    <property type="nucleotide sequence ID" value="NC_006300.1"/>
</dbReference>
<dbReference type="SMR" id="Q65TL3"/>
<dbReference type="STRING" id="221988.MS1090"/>
<dbReference type="KEGG" id="msu:MS1090"/>
<dbReference type="eggNOG" id="COG0072">
    <property type="taxonomic scope" value="Bacteria"/>
</dbReference>
<dbReference type="HOGENOM" id="CLU_016891_0_0_6"/>
<dbReference type="OrthoDB" id="9805455at2"/>
<dbReference type="Proteomes" id="UP000000607">
    <property type="component" value="Chromosome"/>
</dbReference>
<dbReference type="GO" id="GO:0009328">
    <property type="term" value="C:phenylalanine-tRNA ligase complex"/>
    <property type="evidence" value="ECO:0007669"/>
    <property type="project" value="TreeGrafter"/>
</dbReference>
<dbReference type="GO" id="GO:0005524">
    <property type="term" value="F:ATP binding"/>
    <property type="evidence" value="ECO:0007669"/>
    <property type="project" value="UniProtKB-UniRule"/>
</dbReference>
<dbReference type="GO" id="GO:0000287">
    <property type="term" value="F:magnesium ion binding"/>
    <property type="evidence" value="ECO:0007669"/>
    <property type="project" value="UniProtKB-UniRule"/>
</dbReference>
<dbReference type="GO" id="GO:0004826">
    <property type="term" value="F:phenylalanine-tRNA ligase activity"/>
    <property type="evidence" value="ECO:0007669"/>
    <property type="project" value="UniProtKB-UniRule"/>
</dbReference>
<dbReference type="GO" id="GO:0000049">
    <property type="term" value="F:tRNA binding"/>
    <property type="evidence" value="ECO:0007669"/>
    <property type="project" value="UniProtKB-KW"/>
</dbReference>
<dbReference type="GO" id="GO:0006432">
    <property type="term" value="P:phenylalanyl-tRNA aminoacylation"/>
    <property type="evidence" value="ECO:0007669"/>
    <property type="project" value="UniProtKB-UniRule"/>
</dbReference>
<dbReference type="CDD" id="cd00769">
    <property type="entry name" value="PheRS_beta_core"/>
    <property type="match status" value="1"/>
</dbReference>
<dbReference type="CDD" id="cd02796">
    <property type="entry name" value="tRNA_bind_bactPheRS"/>
    <property type="match status" value="1"/>
</dbReference>
<dbReference type="FunFam" id="2.40.50.140:FF:000045">
    <property type="entry name" value="Phenylalanine--tRNA ligase beta subunit"/>
    <property type="match status" value="1"/>
</dbReference>
<dbReference type="FunFam" id="3.30.56.10:FF:000002">
    <property type="entry name" value="Phenylalanine--tRNA ligase beta subunit"/>
    <property type="match status" value="1"/>
</dbReference>
<dbReference type="FunFam" id="3.30.70.380:FF:000001">
    <property type="entry name" value="Phenylalanine--tRNA ligase beta subunit"/>
    <property type="match status" value="1"/>
</dbReference>
<dbReference type="FunFam" id="3.30.930.10:FF:000022">
    <property type="entry name" value="Phenylalanine--tRNA ligase beta subunit"/>
    <property type="match status" value="1"/>
</dbReference>
<dbReference type="FunFam" id="3.50.40.10:FF:000001">
    <property type="entry name" value="Phenylalanine--tRNA ligase beta subunit"/>
    <property type="match status" value="1"/>
</dbReference>
<dbReference type="Gene3D" id="3.30.56.10">
    <property type="match status" value="2"/>
</dbReference>
<dbReference type="Gene3D" id="3.30.930.10">
    <property type="entry name" value="Bira Bifunctional Protein, Domain 2"/>
    <property type="match status" value="1"/>
</dbReference>
<dbReference type="Gene3D" id="3.30.70.380">
    <property type="entry name" value="Ferrodoxin-fold anticodon-binding domain"/>
    <property type="match status" value="1"/>
</dbReference>
<dbReference type="Gene3D" id="2.40.50.140">
    <property type="entry name" value="Nucleic acid-binding proteins"/>
    <property type="match status" value="1"/>
</dbReference>
<dbReference type="Gene3D" id="3.50.40.10">
    <property type="entry name" value="Phenylalanyl-trna Synthetase, Chain B, domain 3"/>
    <property type="match status" value="1"/>
</dbReference>
<dbReference type="HAMAP" id="MF_00283">
    <property type="entry name" value="Phe_tRNA_synth_beta1"/>
    <property type="match status" value="1"/>
</dbReference>
<dbReference type="InterPro" id="IPR045864">
    <property type="entry name" value="aa-tRNA-synth_II/BPL/LPL"/>
</dbReference>
<dbReference type="InterPro" id="IPR005146">
    <property type="entry name" value="B3/B4_tRNA-bd"/>
</dbReference>
<dbReference type="InterPro" id="IPR009061">
    <property type="entry name" value="DNA-bd_dom_put_sf"/>
</dbReference>
<dbReference type="InterPro" id="IPR005121">
    <property type="entry name" value="Fdx_antiC-bd"/>
</dbReference>
<dbReference type="InterPro" id="IPR036690">
    <property type="entry name" value="Fdx_antiC-bd_sf"/>
</dbReference>
<dbReference type="InterPro" id="IPR012340">
    <property type="entry name" value="NA-bd_OB-fold"/>
</dbReference>
<dbReference type="InterPro" id="IPR045060">
    <property type="entry name" value="Phe-tRNA-ligase_IIc_bsu"/>
</dbReference>
<dbReference type="InterPro" id="IPR004532">
    <property type="entry name" value="Phe-tRNA-ligase_IIc_bsu_bact"/>
</dbReference>
<dbReference type="InterPro" id="IPR020825">
    <property type="entry name" value="Phe-tRNA_synthase-like_B3/B4"/>
</dbReference>
<dbReference type="InterPro" id="IPR041616">
    <property type="entry name" value="PheRS_beta_core"/>
</dbReference>
<dbReference type="InterPro" id="IPR002547">
    <property type="entry name" value="tRNA-bd_dom"/>
</dbReference>
<dbReference type="InterPro" id="IPR033714">
    <property type="entry name" value="tRNA_bind_bactPheRS"/>
</dbReference>
<dbReference type="InterPro" id="IPR005147">
    <property type="entry name" value="tRNA_synthase_B5-dom"/>
</dbReference>
<dbReference type="NCBIfam" id="TIGR00472">
    <property type="entry name" value="pheT_bact"/>
    <property type="match status" value="1"/>
</dbReference>
<dbReference type="NCBIfam" id="NF045760">
    <property type="entry name" value="YtpR"/>
    <property type="match status" value="1"/>
</dbReference>
<dbReference type="PANTHER" id="PTHR10947:SF0">
    <property type="entry name" value="PHENYLALANINE--TRNA LIGASE BETA SUBUNIT"/>
    <property type="match status" value="1"/>
</dbReference>
<dbReference type="PANTHER" id="PTHR10947">
    <property type="entry name" value="PHENYLALANYL-TRNA SYNTHETASE BETA CHAIN AND LEUCINE-RICH REPEAT-CONTAINING PROTEIN 47"/>
    <property type="match status" value="1"/>
</dbReference>
<dbReference type="Pfam" id="PF03483">
    <property type="entry name" value="B3_4"/>
    <property type="match status" value="1"/>
</dbReference>
<dbReference type="Pfam" id="PF03484">
    <property type="entry name" value="B5"/>
    <property type="match status" value="1"/>
</dbReference>
<dbReference type="Pfam" id="PF03147">
    <property type="entry name" value="FDX-ACB"/>
    <property type="match status" value="1"/>
</dbReference>
<dbReference type="Pfam" id="PF01588">
    <property type="entry name" value="tRNA_bind"/>
    <property type="match status" value="1"/>
</dbReference>
<dbReference type="Pfam" id="PF17759">
    <property type="entry name" value="tRNA_synthFbeta"/>
    <property type="match status" value="1"/>
</dbReference>
<dbReference type="SMART" id="SM00873">
    <property type="entry name" value="B3_4"/>
    <property type="match status" value="1"/>
</dbReference>
<dbReference type="SMART" id="SM00874">
    <property type="entry name" value="B5"/>
    <property type="match status" value="1"/>
</dbReference>
<dbReference type="SMART" id="SM00896">
    <property type="entry name" value="FDX-ACB"/>
    <property type="match status" value="1"/>
</dbReference>
<dbReference type="SUPFAM" id="SSF54991">
    <property type="entry name" value="Anticodon-binding domain of PheRS"/>
    <property type="match status" value="1"/>
</dbReference>
<dbReference type="SUPFAM" id="SSF55681">
    <property type="entry name" value="Class II aaRS and biotin synthetases"/>
    <property type="match status" value="1"/>
</dbReference>
<dbReference type="SUPFAM" id="SSF50249">
    <property type="entry name" value="Nucleic acid-binding proteins"/>
    <property type="match status" value="1"/>
</dbReference>
<dbReference type="SUPFAM" id="SSF56037">
    <property type="entry name" value="PheT/TilS domain"/>
    <property type="match status" value="1"/>
</dbReference>
<dbReference type="SUPFAM" id="SSF46955">
    <property type="entry name" value="Putative DNA-binding domain"/>
    <property type="match status" value="1"/>
</dbReference>
<dbReference type="PROSITE" id="PS51483">
    <property type="entry name" value="B5"/>
    <property type="match status" value="1"/>
</dbReference>
<dbReference type="PROSITE" id="PS51447">
    <property type="entry name" value="FDX_ACB"/>
    <property type="match status" value="1"/>
</dbReference>
<dbReference type="PROSITE" id="PS50886">
    <property type="entry name" value="TRBD"/>
    <property type="match status" value="1"/>
</dbReference>
<name>SYFB_MANSM</name>
<organism>
    <name type="scientific">Mannheimia succiniciproducens (strain KCTC 0769BP / MBEL55E)</name>
    <dbReference type="NCBI Taxonomy" id="221988"/>
    <lineage>
        <taxon>Bacteria</taxon>
        <taxon>Pseudomonadati</taxon>
        <taxon>Pseudomonadota</taxon>
        <taxon>Gammaproteobacteria</taxon>
        <taxon>Pasteurellales</taxon>
        <taxon>Pasteurellaceae</taxon>
        <taxon>Basfia</taxon>
    </lineage>
</organism>
<feature type="chain" id="PRO_0000126909" description="Phenylalanine--tRNA ligase beta subunit">
    <location>
        <begin position="1"/>
        <end position="795"/>
    </location>
</feature>
<feature type="domain" description="tRNA-binding" evidence="1">
    <location>
        <begin position="39"/>
        <end position="148"/>
    </location>
</feature>
<feature type="domain" description="B5" evidence="1">
    <location>
        <begin position="401"/>
        <end position="476"/>
    </location>
</feature>
<feature type="domain" description="FDX-ACB" evidence="1">
    <location>
        <begin position="701"/>
        <end position="794"/>
    </location>
</feature>
<feature type="binding site" evidence="1">
    <location>
        <position position="454"/>
    </location>
    <ligand>
        <name>Mg(2+)</name>
        <dbReference type="ChEBI" id="CHEBI:18420"/>
        <note>shared with alpha subunit</note>
    </ligand>
</feature>
<feature type="binding site" evidence="1">
    <location>
        <position position="460"/>
    </location>
    <ligand>
        <name>Mg(2+)</name>
        <dbReference type="ChEBI" id="CHEBI:18420"/>
        <note>shared with alpha subunit</note>
    </ligand>
</feature>
<feature type="binding site" evidence="1">
    <location>
        <position position="463"/>
    </location>
    <ligand>
        <name>Mg(2+)</name>
        <dbReference type="ChEBI" id="CHEBI:18420"/>
        <note>shared with alpha subunit</note>
    </ligand>
</feature>
<feature type="binding site" evidence="1">
    <location>
        <position position="464"/>
    </location>
    <ligand>
        <name>Mg(2+)</name>
        <dbReference type="ChEBI" id="CHEBI:18420"/>
        <note>shared with alpha subunit</note>
    </ligand>
</feature>
<gene>
    <name evidence="1" type="primary">pheT</name>
    <name type="ordered locus">MS1090</name>
</gene>